<comment type="function">
    <text evidence="3">Snake venom serine protease that catalyzes the hydrolysis of arginine esters, kallikrein substrates Pro-Phe-Arg-MCA and Z-Phe-Arg-MCA. Cleaves kininogen analogs to release bradykinin. Induces contraction of the isolated rat uterus directly at high concentrations, but provokes more forceful contractions when injected in presence of bovine plasma. Shows capillary permeability-increasing activity and hypotensive activity on the anesthetized rat.</text>
</comment>
<comment type="activity regulation">
    <text evidence="3">Inhibited by diisopropylfluorophosphate (DFP).</text>
</comment>
<comment type="subunit">
    <text evidence="1">Monomer.</text>
</comment>
<comment type="subcellular location">
    <subcellularLocation>
        <location>Secreted</location>
    </subcellularLocation>
</comment>
<comment type="tissue specificity">
    <text>Expressed by the venom gland.</text>
</comment>
<comment type="PTM">
    <text evidence="1">N-Glycosylated.</text>
</comment>
<comment type="miscellaneous">
    <text evidence="4">Negative results: has no proteolytic activity against dimethyl casein and fibrinogen.</text>
</comment>
<comment type="similarity">
    <text evidence="2">Belongs to the peptidase S1 family. Snake venom subfamily.</text>
</comment>
<protein>
    <recommendedName>
        <fullName>Snake venom serine protease</fullName>
        <shortName>SVSP</shortName>
        <ecNumber>3.4.21.-</ecNumber>
    </recommendedName>
</protein>
<keyword id="KW-0903">Direct protein sequencing</keyword>
<keyword id="KW-1015">Disulfide bond</keyword>
<keyword id="KW-0325">Glycoprotein</keyword>
<keyword id="KW-0378">Hydrolase</keyword>
<keyword id="KW-0382">Hypotensive agent</keyword>
<keyword id="KW-0645">Protease</keyword>
<keyword id="KW-0964">Secreted</keyword>
<keyword id="KW-0720">Serine protease</keyword>
<keyword id="KW-0800">Toxin</keyword>
<feature type="chain" id="PRO_0000417007" description="Snake venom serine protease">
    <location>
        <begin position="1"/>
        <end position="30" status="greater than"/>
    </location>
</feature>
<feature type="domain" description="Peptidase S1" evidence="2">
    <location>
        <begin position="1"/>
        <end position="30" status="greater than"/>
    </location>
</feature>
<feature type="disulfide bond" evidence="2">
    <location>
        <begin position="7"/>
        <end status="unknown"/>
    </location>
</feature>
<feature type="non-terminal residue">
    <location>
        <position position="30"/>
    </location>
</feature>
<evidence type="ECO:0000250" key="1"/>
<evidence type="ECO:0000255" key="2">
    <source>
        <dbReference type="PROSITE-ProRule" id="PRU00274"/>
    </source>
</evidence>
<evidence type="ECO:0000269" key="3">
    <source>
    </source>
</evidence>
<evidence type="ECO:0000305" key="4">
    <source>
    </source>
</evidence>
<sequence>VIGGDECNINEHRFLVALYDPDGFLSGGIL</sequence>
<proteinExistence type="evidence at protein level"/>
<organism>
    <name type="scientific">Crotalus viridis viridis</name>
    <name type="common">Prairie rattlesnake</name>
    <dbReference type="NCBI Taxonomy" id="8742"/>
    <lineage>
        <taxon>Eukaryota</taxon>
        <taxon>Metazoa</taxon>
        <taxon>Chordata</taxon>
        <taxon>Craniata</taxon>
        <taxon>Vertebrata</taxon>
        <taxon>Euteleostomi</taxon>
        <taxon>Lepidosauria</taxon>
        <taxon>Squamata</taxon>
        <taxon>Bifurcata</taxon>
        <taxon>Unidentata</taxon>
        <taxon>Episquamata</taxon>
        <taxon>Toxicofera</taxon>
        <taxon>Serpentes</taxon>
        <taxon>Colubroidea</taxon>
        <taxon>Viperidae</taxon>
        <taxon>Crotalinae</taxon>
        <taxon>Crotalus</taxon>
    </lineage>
</organism>
<reference key="1">
    <citation type="journal article" date="1988" name="Biochim. Biophys. Acta">
        <title>Biochemical and physiological studies on a kallikrein-like enzyme from the venom of Crotalus viridis viridis (prairie rattlesnake).</title>
        <authorList>
            <person name="Komori Y."/>
            <person name="Nikai T."/>
            <person name="Sugihara H."/>
        </authorList>
    </citation>
    <scope>PROTEIN SEQUENCE</scope>
    <scope>FUNCTION</scope>
    <scope>ACTIVITY REGULATION</scope>
    <source>
        <tissue>Venom</tissue>
    </source>
</reference>
<name>VSP_CROVV</name>
<dbReference type="EC" id="3.4.21.-"/>
<dbReference type="SMR" id="P0DJG6"/>
<dbReference type="GO" id="GO:0005576">
    <property type="term" value="C:extracellular region"/>
    <property type="evidence" value="ECO:0007669"/>
    <property type="project" value="UniProtKB-SubCell"/>
</dbReference>
<dbReference type="GO" id="GO:0008236">
    <property type="term" value="F:serine-type peptidase activity"/>
    <property type="evidence" value="ECO:0007669"/>
    <property type="project" value="UniProtKB-KW"/>
</dbReference>
<dbReference type="GO" id="GO:0090729">
    <property type="term" value="F:toxin activity"/>
    <property type="evidence" value="ECO:0007669"/>
    <property type="project" value="UniProtKB-KW"/>
</dbReference>
<dbReference type="GO" id="GO:0006508">
    <property type="term" value="P:proteolysis"/>
    <property type="evidence" value="ECO:0007669"/>
    <property type="project" value="UniProtKB-KW"/>
</dbReference>
<dbReference type="GO" id="GO:0008217">
    <property type="term" value="P:regulation of blood pressure"/>
    <property type="evidence" value="ECO:0007669"/>
    <property type="project" value="UniProtKB-KW"/>
</dbReference>
<accession>P0DJG6</accession>